<dbReference type="EMBL" id="CP001083">
    <property type="protein sequence ID" value="ACQ51706.1"/>
    <property type="molecule type" value="Genomic_DNA"/>
</dbReference>
<dbReference type="SMR" id="C3KYH5"/>
<dbReference type="KEGG" id="cbi:CLJ_B0177"/>
<dbReference type="HOGENOM" id="CLU_036856_0_1_9"/>
<dbReference type="Proteomes" id="UP000002333">
    <property type="component" value="Chromosome"/>
</dbReference>
<dbReference type="GO" id="GO:0005737">
    <property type="term" value="C:cytoplasm"/>
    <property type="evidence" value="ECO:0007669"/>
    <property type="project" value="UniProtKB-SubCell"/>
</dbReference>
<dbReference type="GO" id="GO:0016149">
    <property type="term" value="F:translation release factor activity, codon specific"/>
    <property type="evidence" value="ECO:0007669"/>
    <property type="project" value="UniProtKB-UniRule"/>
</dbReference>
<dbReference type="FunFam" id="3.30.160.20:FF:000004">
    <property type="entry name" value="Peptide chain release factor 1"/>
    <property type="match status" value="1"/>
</dbReference>
<dbReference type="FunFam" id="3.30.70.1660:FF:000002">
    <property type="entry name" value="Peptide chain release factor 1"/>
    <property type="match status" value="1"/>
</dbReference>
<dbReference type="FunFam" id="3.30.70.1660:FF:000004">
    <property type="entry name" value="Peptide chain release factor 1"/>
    <property type="match status" value="1"/>
</dbReference>
<dbReference type="Gene3D" id="3.30.160.20">
    <property type="match status" value="1"/>
</dbReference>
<dbReference type="Gene3D" id="3.30.70.1660">
    <property type="match status" value="1"/>
</dbReference>
<dbReference type="Gene3D" id="6.10.140.1950">
    <property type="match status" value="1"/>
</dbReference>
<dbReference type="HAMAP" id="MF_00093">
    <property type="entry name" value="Rel_fac_1"/>
    <property type="match status" value="1"/>
</dbReference>
<dbReference type="InterPro" id="IPR005139">
    <property type="entry name" value="PCRF"/>
</dbReference>
<dbReference type="InterPro" id="IPR000352">
    <property type="entry name" value="Pep_chain_release_fac_I"/>
</dbReference>
<dbReference type="InterPro" id="IPR045853">
    <property type="entry name" value="Pep_chain_release_fac_I_sf"/>
</dbReference>
<dbReference type="InterPro" id="IPR050057">
    <property type="entry name" value="Prokaryotic/Mito_RF"/>
</dbReference>
<dbReference type="InterPro" id="IPR004373">
    <property type="entry name" value="RF-1"/>
</dbReference>
<dbReference type="NCBIfam" id="TIGR00019">
    <property type="entry name" value="prfA"/>
    <property type="match status" value="1"/>
</dbReference>
<dbReference type="NCBIfam" id="NF001859">
    <property type="entry name" value="PRK00591.1"/>
    <property type="match status" value="1"/>
</dbReference>
<dbReference type="PANTHER" id="PTHR43804">
    <property type="entry name" value="LD18447P"/>
    <property type="match status" value="1"/>
</dbReference>
<dbReference type="PANTHER" id="PTHR43804:SF7">
    <property type="entry name" value="LD18447P"/>
    <property type="match status" value="1"/>
</dbReference>
<dbReference type="Pfam" id="PF03462">
    <property type="entry name" value="PCRF"/>
    <property type="match status" value="1"/>
</dbReference>
<dbReference type="Pfam" id="PF00472">
    <property type="entry name" value="RF-1"/>
    <property type="match status" value="1"/>
</dbReference>
<dbReference type="SMART" id="SM00937">
    <property type="entry name" value="PCRF"/>
    <property type="match status" value="1"/>
</dbReference>
<dbReference type="SUPFAM" id="SSF75620">
    <property type="entry name" value="Release factor"/>
    <property type="match status" value="1"/>
</dbReference>
<dbReference type="PROSITE" id="PS00745">
    <property type="entry name" value="RF_PROK_I"/>
    <property type="match status" value="1"/>
</dbReference>
<feature type="chain" id="PRO_1000202686" description="Peptide chain release factor 1">
    <location>
        <begin position="1"/>
        <end position="358"/>
    </location>
</feature>
<feature type="modified residue" description="N5-methylglutamine" evidence="1">
    <location>
        <position position="233"/>
    </location>
</feature>
<organism>
    <name type="scientific">Clostridium botulinum (strain 657 / Type Ba4)</name>
    <dbReference type="NCBI Taxonomy" id="515621"/>
    <lineage>
        <taxon>Bacteria</taxon>
        <taxon>Bacillati</taxon>
        <taxon>Bacillota</taxon>
        <taxon>Clostridia</taxon>
        <taxon>Eubacteriales</taxon>
        <taxon>Clostridiaceae</taxon>
        <taxon>Clostridium</taxon>
    </lineage>
</organism>
<protein>
    <recommendedName>
        <fullName evidence="1">Peptide chain release factor 1</fullName>
        <shortName evidence="1">RF-1</shortName>
    </recommendedName>
</protein>
<proteinExistence type="inferred from homology"/>
<keyword id="KW-0963">Cytoplasm</keyword>
<keyword id="KW-0488">Methylation</keyword>
<keyword id="KW-0648">Protein biosynthesis</keyword>
<name>RF1_CLOB6</name>
<comment type="function">
    <text evidence="1">Peptide chain release factor 1 directs the termination of translation in response to the peptide chain termination codons UAG and UAA.</text>
</comment>
<comment type="subcellular location">
    <subcellularLocation>
        <location evidence="1">Cytoplasm</location>
    </subcellularLocation>
</comment>
<comment type="PTM">
    <text evidence="1">Methylated by PrmC. Methylation increases the termination efficiency of RF1.</text>
</comment>
<comment type="similarity">
    <text evidence="1">Belongs to the prokaryotic/mitochondrial release factor family.</text>
</comment>
<sequence>MLERLNFIENKYEELSNKISDPSVMANQKEWQKLCKEHADLEIIVNTYREYKKAQEDLESDKEMLKEESDKDLREMAQEEIKELTLKLEDLERELTILLLPKDPNDDKDVFIEIRAGAGGEEAALFASNLLRMYTRYAERKNWKVETMSLNATDIGGFKEVTVAIKGKGAYSRLKYESGVHRVQRVPDTESSGRIHTSTATVAVLPEVDDVDININANDLRIDVYRASGHGGQCVNTTDSAVRITHLPTGLVVTCQDEKSQLKNKEKAMKVLKARLFEAAEAERAASIAEDRKSQVGTGDRSERIRTYNYPQGRITDHRIGLTLYKLETFLDGDIDEVIEALVTEDQAEKMKDLGRVN</sequence>
<accession>C3KYH5</accession>
<evidence type="ECO:0000255" key="1">
    <source>
        <dbReference type="HAMAP-Rule" id="MF_00093"/>
    </source>
</evidence>
<reference key="1">
    <citation type="submission" date="2008-05" db="EMBL/GenBank/DDBJ databases">
        <title>Genome sequence of Clostridium botulinum Ba4 strain 657.</title>
        <authorList>
            <person name="Shrivastava S."/>
            <person name="Brown J.L."/>
            <person name="Bruce D."/>
            <person name="Detter C."/>
            <person name="Munk C."/>
            <person name="Smith L.A."/>
            <person name="Smith T.J."/>
            <person name="Sutton G."/>
            <person name="Brettin T.S."/>
        </authorList>
    </citation>
    <scope>NUCLEOTIDE SEQUENCE [LARGE SCALE GENOMIC DNA]</scope>
    <source>
        <strain>657 / Type Ba4</strain>
    </source>
</reference>
<gene>
    <name evidence="1" type="primary">prfA</name>
    <name type="ordered locus">CLJ_B0177</name>
</gene>